<proteinExistence type="inferred from homology"/>
<name>SECD_ALIAD</name>
<keyword id="KW-1003">Cell membrane</keyword>
<keyword id="KW-0472">Membrane</keyword>
<keyword id="KW-0653">Protein transport</keyword>
<keyword id="KW-1185">Reference proteome</keyword>
<keyword id="KW-0811">Translocation</keyword>
<keyword id="KW-0812">Transmembrane</keyword>
<keyword id="KW-1133">Transmembrane helix</keyword>
<keyword id="KW-0813">Transport</keyword>
<accession>C8WQG7</accession>
<reference key="1">
    <citation type="submission" date="2009-09" db="EMBL/GenBank/DDBJ databases">
        <title>The complete chromosome of Alicyclobacillus acidocaldarius subsp. acidocaldarius DSM 446.</title>
        <authorList>
            <consortium name="US DOE Joint Genome Institute (JGI-PGF)"/>
            <person name="Lucas S."/>
            <person name="Copeland A."/>
            <person name="Lapidus A."/>
            <person name="Glavina del Rio T."/>
            <person name="Dalin E."/>
            <person name="Tice H."/>
            <person name="Bruce D."/>
            <person name="Goodwin L."/>
            <person name="Pitluck S."/>
            <person name="Kyrpides N."/>
            <person name="Mavromatis K."/>
            <person name="Ivanova N."/>
            <person name="Ovchinnikova G."/>
            <person name="Chertkov O."/>
            <person name="Sims D."/>
            <person name="Brettin T."/>
            <person name="Detter J.C."/>
            <person name="Han C."/>
            <person name="Larimer F."/>
            <person name="Land M."/>
            <person name="Hauser L."/>
            <person name="Markowitz V."/>
            <person name="Cheng J.-F."/>
            <person name="Hugenholtz P."/>
            <person name="Woyke T."/>
            <person name="Wu D."/>
            <person name="Pukall R."/>
            <person name="Klenk H.-P."/>
            <person name="Eisen J.A."/>
        </authorList>
    </citation>
    <scope>NUCLEOTIDE SEQUENCE [LARGE SCALE GENOMIC DNA]</scope>
    <source>
        <strain>ATCC 27009 / DSM 446 / BCRC 14685 / JCM 5260 / KCTC 1825 / NBRC 15652 / NCIMB 11725 / NRRL B-14509 / 104-IA</strain>
    </source>
</reference>
<evidence type="ECO:0000255" key="1">
    <source>
        <dbReference type="HAMAP-Rule" id="MF_01463"/>
    </source>
</evidence>
<feature type="chain" id="PRO_5000520992" description="Protein translocase subunit SecD">
    <location>
        <begin position="1"/>
        <end position="433"/>
    </location>
</feature>
<feature type="transmembrane region" description="Helical" evidence="1">
    <location>
        <begin position="7"/>
        <end position="27"/>
    </location>
</feature>
<feature type="transmembrane region" description="Helical" evidence="1">
    <location>
        <begin position="257"/>
        <end position="277"/>
    </location>
</feature>
<feature type="transmembrane region" description="Helical" evidence="1">
    <location>
        <begin position="278"/>
        <end position="298"/>
    </location>
</feature>
<feature type="transmembrane region" description="Helical" evidence="1">
    <location>
        <begin position="300"/>
        <end position="320"/>
    </location>
</feature>
<feature type="transmembrane region" description="Helical" evidence="1">
    <location>
        <begin position="354"/>
        <end position="374"/>
    </location>
</feature>
<feature type="transmembrane region" description="Helical" evidence="1">
    <location>
        <begin position="380"/>
        <end position="400"/>
    </location>
</feature>
<dbReference type="EMBL" id="CP001727">
    <property type="protein sequence ID" value="ACV59112.1"/>
    <property type="molecule type" value="Genomic_DNA"/>
</dbReference>
<dbReference type="RefSeq" id="WP_012811377.1">
    <property type="nucleotide sequence ID" value="NC_013205.1"/>
</dbReference>
<dbReference type="SMR" id="C8WQG7"/>
<dbReference type="STRING" id="521098.Aaci_2102"/>
<dbReference type="KEGG" id="aac:Aaci_2102"/>
<dbReference type="eggNOG" id="COG0342">
    <property type="taxonomic scope" value="Bacteria"/>
</dbReference>
<dbReference type="HOGENOM" id="CLU_007894_4_2_9"/>
<dbReference type="Proteomes" id="UP000001917">
    <property type="component" value="Chromosome"/>
</dbReference>
<dbReference type="GO" id="GO:0005886">
    <property type="term" value="C:plasma membrane"/>
    <property type="evidence" value="ECO:0007669"/>
    <property type="project" value="UniProtKB-SubCell"/>
</dbReference>
<dbReference type="GO" id="GO:0015450">
    <property type="term" value="F:protein-transporting ATPase activity"/>
    <property type="evidence" value="ECO:0007669"/>
    <property type="project" value="InterPro"/>
</dbReference>
<dbReference type="GO" id="GO:0065002">
    <property type="term" value="P:intracellular protein transmembrane transport"/>
    <property type="evidence" value="ECO:0007669"/>
    <property type="project" value="UniProtKB-UniRule"/>
</dbReference>
<dbReference type="GO" id="GO:0006605">
    <property type="term" value="P:protein targeting"/>
    <property type="evidence" value="ECO:0007669"/>
    <property type="project" value="UniProtKB-UniRule"/>
</dbReference>
<dbReference type="GO" id="GO:0043952">
    <property type="term" value="P:protein transport by the Sec complex"/>
    <property type="evidence" value="ECO:0007669"/>
    <property type="project" value="UniProtKB-UniRule"/>
</dbReference>
<dbReference type="Gene3D" id="3.30.1360.200">
    <property type="match status" value="1"/>
</dbReference>
<dbReference type="Gene3D" id="3.30.70.3400">
    <property type="match status" value="1"/>
</dbReference>
<dbReference type="Gene3D" id="1.20.1640.10">
    <property type="entry name" value="Multidrug efflux transporter AcrB transmembrane domain"/>
    <property type="match status" value="1"/>
</dbReference>
<dbReference type="HAMAP" id="MF_01463_B">
    <property type="entry name" value="SecD_B"/>
    <property type="match status" value="1"/>
</dbReference>
<dbReference type="InterPro" id="IPR001036">
    <property type="entry name" value="Acrflvin-R"/>
</dbReference>
<dbReference type="InterPro" id="IPR005791">
    <property type="entry name" value="SecD"/>
</dbReference>
<dbReference type="InterPro" id="IPR022813">
    <property type="entry name" value="SecD/SecF_arch_bac"/>
</dbReference>
<dbReference type="InterPro" id="IPR048631">
    <property type="entry name" value="SecD_1st"/>
</dbReference>
<dbReference type="InterPro" id="IPR048634">
    <property type="entry name" value="SecD_SecF_C"/>
</dbReference>
<dbReference type="InterPro" id="IPR055344">
    <property type="entry name" value="SecD_SecF_C_bact"/>
</dbReference>
<dbReference type="InterPro" id="IPR054384">
    <property type="entry name" value="SecDF_P1_head"/>
</dbReference>
<dbReference type="NCBIfam" id="TIGR00916">
    <property type="entry name" value="2A0604s01"/>
    <property type="match status" value="1"/>
</dbReference>
<dbReference type="NCBIfam" id="TIGR01129">
    <property type="entry name" value="secD"/>
    <property type="match status" value="1"/>
</dbReference>
<dbReference type="PANTHER" id="PTHR30081:SF1">
    <property type="entry name" value="PROTEIN TRANSLOCASE SUBUNIT SECD"/>
    <property type="match status" value="1"/>
</dbReference>
<dbReference type="PANTHER" id="PTHR30081">
    <property type="entry name" value="PROTEIN-EXPORT MEMBRANE PROTEIN SEC"/>
    <property type="match status" value="1"/>
</dbReference>
<dbReference type="Pfam" id="PF21760">
    <property type="entry name" value="SecD_1st"/>
    <property type="match status" value="1"/>
</dbReference>
<dbReference type="Pfam" id="PF02355">
    <property type="entry name" value="SecD_SecF_C"/>
    <property type="match status" value="1"/>
</dbReference>
<dbReference type="Pfam" id="PF22599">
    <property type="entry name" value="SecDF_P1_head"/>
    <property type="match status" value="1"/>
</dbReference>
<dbReference type="PRINTS" id="PR00702">
    <property type="entry name" value="ACRIFLAVINRP"/>
</dbReference>
<dbReference type="SUPFAM" id="SSF82866">
    <property type="entry name" value="Multidrug efflux transporter AcrB transmembrane domain"/>
    <property type="match status" value="1"/>
</dbReference>
<comment type="function">
    <text evidence="1">Part of the Sec protein translocase complex. Interacts with the SecYEG preprotein conducting channel. SecDF uses the proton motive force (PMF) to complete protein translocation after the ATP-dependent function of SecA.</text>
</comment>
<comment type="subunit">
    <text evidence="1">Forms a complex with SecF. Part of the essential Sec protein translocation apparatus which comprises SecA, SecYEG and auxiliary proteins SecDF. Other proteins may also be involved.</text>
</comment>
<comment type="subcellular location">
    <subcellularLocation>
        <location evidence="1">Cell membrane</location>
        <topology evidence="1">Multi-pass membrane protein</topology>
    </subcellularLocation>
</comment>
<comment type="similarity">
    <text evidence="1">Belongs to the SecD/SecF family. SecD subfamily.</text>
</comment>
<gene>
    <name evidence="1" type="primary">secD</name>
    <name type="ordered locus">Aaci_2102</name>
</gene>
<sequence length="433" mass="45961">MKWGRLLAFLAMVVVVLGLTISTGPKIWKSIPLGLDLKGGVDLLYAVDTPKGHPLDSTGKAALVRAIEMRVNSLGVSSPIIQLEGRNQLGQDQIRVEVAGVKNQQEAVSVIGATAQLAIYGSAKIDPKTGKIVPVGPPLATGADLKSNAHWVVDQQTGQNAVAIEFKNASLWTSITKRYLQKPIYVFLNGQLLTNPVVEQVMYTGQSEISGGNLTTPQACIDLANELNAGALPYPLTLESETSVGPTLGATSLHRTLIAGVIAVVLIFAFMIAAYRMAGLIADIALVAYGYLTLLTFAGLHVVLTLSGLAALILGVGIAVDANIITYERIKDEVRNGRSLRSAVRIGNKNAFRTIVDSNATTFIAGLIMYIFGGEGDVRGFAVALMVGIIVSLLTAVLFARAMLLTFTAAQAVKNPWWYGAPRGVVKSREAKV</sequence>
<organism>
    <name type="scientific">Alicyclobacillus acidocaldarius subsp. acidocaldarius (strain ATCC 27009 / DSM 446 / BCRC 14685 / JCM 5260 / KCTC 1825 / NBRC 15652 / NCIMB 11725 / NRRL B-14509 / 104-IA)</name>
    <name type="common">Bacillus acidocaldarius</name>
    <dbReference type="NCBI Taxonomy" id="521098"/>
    <lineage>
        <taxon>Bacteria</taxon>
        <taxon>Bacillati</taxon>
        <taxon>Bacillota</taxon>
        <taxon>Bacilli</taxon>
        <taxon>Bacillales</taxon>
        <taxon>Alicyclobacillaceae</taxon>
        <taxon>Alicyclobacillus</taxon>
    </lineage>
</organism>
<protein>
    <recommendedName>
        <fullName evidence="1">Protein translocase subunit SecD</fullName>
    </recommendedName>
</protein>